<protein>
    <recommendedName>
        <fullName evidence="1">5-methyltetrahydropteroyltriglutamate--homocysteine methyltransferase</fullName>
        <ecNumber evidence="1">2.1.1.14</ecNumber>
    </recommendedName>
    <alternativeName>
        <fullName evidence="1">Cobalamin-independent methionine synthase</fullName>
    </alternativeName>
    <alternativeName>
        <fullName evidence="1">Methionine synthase, vitamin-B12 independent isozyme</fullName>
    </alternativeName>
</protein>
<accession>Q058E7</accession>
<reference key="1">
    <citation type="journal article" date="2006" name="Science">
        <title>A small microbial genome: the end of a long symbiotic relationship?</title>
        <authorList>
            <person name="Perez-Brocal V."/>
            <person name="Gil R."/>
            <person name="Ramos S."/>
            <person name="Lamelas A."/>
            <person name="Postigo M."/>
            <person name="Michelena J.M."/>
            <person name="Silva F.J."/>
            <person name="Moya A."/>
            <person name="Latorre A."/>
        </authorList>
    </citation>
    <scope>NUCLEOTIDE SEQUENCE [LARGE SCALE GENOMIC DNA]</scope>
    <source>
        <strain>Cc</strain>
    </source>
</reference>
<dbReference type="EC" id="2.1.1.14" evidence="1"/>
<dbReference type="EMBL" id="CP000263">
    <property type="protein sequence ID" value="ABJ90502.1"/>
    <property type="molecule type" value="Genomic_DNA"/>
</dbReference>
<dbReference type="RefSeq" id="WP_011672421.1">
    <property type="nucleotide sequence ID" value="NC_008513.1"/>
</dbReference>
<dbReference type="SMR" id="Q058E7"/>
<dbReference type="STRING" id="372461.BCc_017"/>
<dbReference type="KEGG" id="bcc:BCc_017"/>
<dbReference type="eggNOG" id="COG0620">
    <property type="taxonomic scope" value="Bacteria"/>
</dbReference>
<dbReference type="HOGENOM" id="CLU_013175_0_0_6"/>
<dbReference type="OrthoDB" id="244285at2"/>
<dbReference type="UniPathway" id="UPA00051">
    <property type="reaction ID" value="UER00082"/>
</dbReference>
<dbReference type="Proteomes" id="UP000000669">
    <property type="component" value="Chromosome"/>
</dbReference>
<dbReference type="GO" id="GO:0003871">
    <property type="term" value="F:5-methyltetrahydropteroyltriglutamate-homocysteine S-methyltransferase activity"/>
    <property type="evidence" value="ECO:0007669"/>
    <property type="project" value="UniProtKB-UniRule"/>
</dbReference>
<dbReference type="GO" id="GO:0008270">
    <property type="term" value="F:zinc ion binding"/>
    <property type="evidence" value="ECO:0007669"/>
    <property type="project" value="InterPro"/>
</dbReference>
<dbReference type="GO" id="GO:0009086">
    <property type="term" value="P:methionine biosynthetic process"/>
    <property type="evidence" value="ECO:0007669"/>
    <property type="project" value="UniProtKB-UniRule"/>
</dbReference>
<dbReference type="GO" id="GO:0032259">
    <property type="term" value="P:methylation"/>
    <property type="evidence" value="ECO:0007669"/>
    <property type="project" value="UniProtKB-KW"/>
</dbReference>
<dbReference type="CDD" id="cd03311">
    <property type="entry name" value="CIMS_C_terminal_like"/>
    <property type="match status" value="1"/>
</dbReference>
<dbReference type="CDD" id="cd03312">
    <property type="entry name" value="CIMS_N_terminal_like"/>
    <property type="match status" value="1"/>
</dbReference>
<dbReference type="FunFam" id="3.20.20.210:FF:000002">
    <property type="entry name" value="5-methyltetrahydropteroyltriglutamate--homocysteine methyltransferase"/>
    <property type="match status" value="1"/>
</dbReference>
<dbReference type="Gene3D" id="3.20.20.210">
    <property type="match status" value="2"/>
</dbReference>
<dbReference type="HAMAP" id="MF_00172">
    <property type="entry name" value="Meth_synth"/>
    <property type="match status" value="1"/>
</dbReference>
<dbReference type="InterPro" id="IPR013215">
    <property type="entry name" value="Cbl-indep_Met_Synth_N"/>
</dbReference>
<dbReference type="InterPro" id="IPR006276">
    <property type="entry name" value="Cobalamin-indep_Met_synthase"/>
</dbReference>
<dbReference type="InterPro" id="IPR002629">
    <property type="entry name" value="Met_Synth_C/arc"/>
</dbReference>
<dbReference type="InterPro" id="IPR038071">
    <property type="entry name" value="UROD/MetE-like_sf"/>
</dbReference>
<dbReference type="NCBIfam" id="TIGR01371">
    <property type="entry name" value="met_syn_B12ind"/>
    <property type="match status" value="1"/>
</dbReference>
<dbReference type="NCBIfam" id="NF003556">
    <property type="entry name" value="PRK05222.1"/>
    <property type="match status" value="1"/>
</dbReference>
<dbReference type="PANTHER" id="PTHR30519">
    <property type="entry name" value="5-METHYLTETRAHYDROPTEROYLTRIGLUTAMATE--HOMOCYSTEINE METHYLTRANSFERASE"/>
    <property type="match status" value="1"/>
</dbReference>
<dbReference type="Pfam" id="PF08267">
    <property type="entry name" value="Meth_synt_1"/>
    <property type="match status" value="1"/>
</dbReference>
<dbReference type="Pfam" id="PF01717">
    <property type="entry name" value="Meth_synt_2"/>
    <property type="match status" value="1"/>
</dbReference>
<dbReference type="PIRSF" id="PIRSF000382">
    <property type="entry name" value="MeTrfase_B12_ind"/>
    <property type="match status" value="1"/>
</dbReference>
<dbReference type="SUPFAM" id="SSF51726">
    <property type="entry name" value="UROD/MetE-like"/>
    <property type="match status" value="2"/>
</dbReference>
<keyword id="KW-0028">Amino-acid biosynthesis</keyword>
<keyword id="KW-0479">Metal-binding</keyword>
<keyword id="KW-0486">Methionine biosynthesis</keyword>
<keyword id="KW-0489">Methyltransferase</keyword>
<keyword id="KW-1185">Reference proteome</keyword>
<keyword id="KW-0677">Repeat</keyword>
<keyword id="KW-0808">Transferase</keyword>
<keyword id="KW-0862">Zinc</keyword>
<organism>
    <name type="scientific">Buchnera aphidicola subsp. Cinara cedri (strain Cc)</name>
    <dbReference type="NCBI Taxonomy" id="372461"/>
    <lineage>
        <taxon>Bacteria</taxon>
        <taxon>Pseudomonadati</taxon>
        <taxon>Pseudomonadota</taxon>
        <taxon>Gammaproteobacteria</taxon>
        <taxon>Enterobacterales</taxon>
        <taxon>Erwiniaceae</taxon>
        <taxon>Buchnera</taxon>
    </lineage>
</organism>
<evidence type="ECO:0000255" key="1">
    <source>
        <dbReference type="HAMAP-Rule" id="MF_00172"/>
    </source>
</evidence>
<feature type="chain" id="PRO_1000017228" description="5-methyltetrahydropteroyltriglutamate--homocysteine methyltransferase">
    <location>
        <begin position="1"/>
        <end position="760"/>
    </location>
</feature>
<feature type="active site" description="Proton donor" evidence="1">
    <location>
        <position position="697"/>
    </location>
</feature>
<feature type="binding site" evidence="1">
    <location>
        <begin position="17"/>
        <end position="20"/>
    </location>
    <ligand>
        <name>5-methyltetrahydropteroyltri-L-glutamate</name>
        <dbReference type="ChEBI" id="CHEBI:58207"/>
    </ligand>
</feature>
<feature type="binding site" evidence="1">
    <location>
        <position position="118"/>
    </location>
    <ligand>
        <name>5-methyltetrahydropteroyltri-L-glutamate</name>
        <dbReference type="ChEBI" id="CHEBI:58207"/>
    </ligand>
</feature>
<feature type="binding site" evidence="1">
    <location>
        <begin position="434"/>
        <end position="436"/>
    </location>
    <ligand>
        <name>L-homocysteine</name>
        <dbReference type="ChEBI" id="CHEBI:58199"/>
    </ligand>
</feature>
<feature type="binding site" evidence="1">
    <location>
        <begin position="434"/>
        <end position="436"/>
    </location>
    <ligand>
        <name>L-methionine</name>
        <dbReference type="ChEBI" id="CHEBI:57844"/>
    </ligand>
</feature>
<feature type="binding site" evidence="1">
    <location>
        <position position="487"/>
    </location>
    <ligand>
        <name>L-homocysteine</name>
        <dbReference type="ChEBI" id="CHEBI:58199"/>
    </ligand>
</feature>
<feature type="binding site" evidence="1">
    <location>
        <position position="487"/>
    </location>
    <ligand>
        <name>L-methionine</name>
        <dbReference type="ChEBI" id="CHEBI:57844"/>
    </ligand>
</feature>
<feature type="binding site" evidence="1">
    <location>
        <begin position="518"/>
        <end position="519"/>
    </location>
    <ligand>
        <name>5-methyltetrahydropteroyltri-L-glutamate</name>
        <dbReference type="ChEBI" id="CHEBI:58207"/>
    </ligand>
</feature>
<feature type="binding site" evidence="1">
    <location>
        <position position="564"/>
    </location>
    <ligand>
        <name>5-methyltetrahydropteroyltri-L-glutamate</name>
        <dbReference type="ChEBI" id="CHEBI:58207"/>
    </ligand>
</feature>
<feature type="binding site" evidence="1">
    <location>
        <position position="602"/>
    </location>
    <ligand>
        <name>L-homocysteine</name>
        <dbReference type="ChEBI" id="CHEBI:58199"/>
    </ligand>
</feature>
<feature type="binding site" evidence="1">
    <location>
        <position position="602"/>
    </location>
    <ligand>
        <name>L-methionine</name>
        <dbReference type="ChEBI" id="CHEBI:57844"/>
    </ligand>
</feature>
<feature type="binding site" evidence="1">
    <location>
        <position position="608"/>
    </location>
    <ligand>
        <name>5-methyltetrahydropteroyltri-L-glutamate</name>
        <dbReference type="ChEBI" id="CHEBI:58207"/>
    </ligand>
</feature>
<feature type="binding site" evidence="1">
    <location>
        <position position="644"/>
    </location>
    <ligand>
        <name>Zn(2+)</name>
        <dbReference type="ChEBI" id="CHEBI:29105"/>
        <note>catalytic</note>
    </ligand>
</feature>
<feature type="binding site" evidence="1">
    <location>
        <position position="646"/>
    </location>
    <ligand>
        <name>Zn(2+)</name>
        <dbReference type="ChEBI" id="CHEBI:29105"/>
        <note>catalytic</note>
    </ligand>
</feature>
<feature type="binding site" evidence="1">
    <location>
        <position position="668"/>
    </location>
    <ligand>
        <name>Zn(2+)</name>
        <dbReference type="ChEBI" id="CHEBI:29105"/>
        <note>catalytic</note>
    </ligand>
</feature>
<feature type="binding site" evidence="1">
    <location>
        <position position="729"/>
    </location>
    <ligand>
        <name>Zn(2+)</name>
        <dbReference type="ChEBI" id="CHEBI:29105"/>
        <note>catalytic</note>
    </ligand>
</feature>
<sequence length="760" mass="88414">MAIKNHILGFPRIGLNRELKFALEKYWSKKNTLEELLLIGKNIRKENWKNQIDSGMDYVTVGDFAWYDHVLNISMMINNIPERHNPNNHILNIDTLFKVARGSKGVDNNICSASEMTKWFNTNYHYIVPEFTSNQKFYFAWKQILEETDEALSLGYKVKPVLLGPLTYLWLGKVKNSKINKLDLLKKILPIYIQVFKELSSRNINWIQIDEPILVLDIPKNWKKEFQSTYKFLDGKIKILLATYFGDITHNLDIINKLSIQGLHIDLVSSKYDLLKLSKSINNNFLLSLGIINGRNIWKTNLLEWFYKLKDFMKINNNFWISSSCSLLHVPLDITIEENLTDFVKSWFSFGIQKCLEISLLSQVLQNNLDIKELKNWIKPIHEYKSSNIVNNTSVQKRTLKISSEQFIRKNEFSVRSKIQKETLCLPVLPTTTIGSFPQTSEIRKLRLDYKNKKINQLDYEKQIKIHIKKNIIQQEQLGLDVLVHGEPERNDMVEYFSEYLEGFVFTTYGWVQSYGSRCVKPPIIVGDISRITPMTVMWSKYAQSLTKKPVKAMLTGPVTILCWSFPREDISKEDICNQIAISLRDEVLDLENSGINIIQIDEPALREGLPLRTHEWNNYLRWAVKSFKICSSGVKNSTQIHTHMCYCEFNDIMPAIVDLDADVITIETSRSDMELLEFFKTFKYPNAIGPGVYDIHSPNIPSVQSIEKLLKKALKYISIQQLWVNPDCGLKTRNWTETSLALQNMLQATLNIRKEYFKK</sequence>
<comment type="function">
    <text evidence="1">Catalyzes the transfer of a methyl group from 5-methyltetrahydrofolate to homocysteine resulting in methionine formation.</text>
</comment>
<comment type="catalytic activity">
    <reaction evidence="1">
        <text>5-methyltetrahydropteroyltri-L-glutamate + L-homocysteine = tetrahydropteroyltri-L-glutamate + L-methionine</text>
        <dbReference type="Rhea" id="RHEA:21196"/>
        <dbReference type="ChEBI" id="CHEBI:57844"/>
        <dbReference type="ChEBI" id="CHEBI:58140"/>
        <dbReference type="ChEBI" id="CHEBI:58199"/>
        <dbReference type="ChEBI" id="CHEBI:58207"/>
        <dbReference type="EC" id="2.1.1.14"/>
    </reaction>
</comment>
<comment type="cofactor">
    <cofactor evidence="1">
        <name>Zn(2+)</name>
        <dbReference type="ChEBI" id="CHEBI:29105"/>
    </cofactor>
    <text evidence="1">Binds 1 zinc ion per subunit.</text>
</comment>
<comment type="pathway">
    <text evidence="1">Amino-acid biosynthesis; L-methionine biosynthesis via de novo pathway; L-methionine from L-homocysteine (MetE route): step 1/1.</text>
</comment>
<comment type="similarity">
    <text evidence="1">Belongs to the vitamin-B12 independent methionine synthase family.</text>
</comment>
<proteinExistence type="inferred from homology"/>
<gene>
    <name evidence="1" type="primary">metE</name>
    <name type="ordered locus">BCc_017</name>
</gene>
<name>METE_BUCCC</name>